<gene>
    <name evidence="4" type="primary">icaT</name>
    <name evidence="3" type="synonym">gem1</name>
    <name evidence="4" type="synonym">yfdF</name>
    <name evidence="7" type="ORF">EKN05_003775</name>
    <name evidence="6" type="ORF">SF5M90T_2352</name>
</gene>
<name>ICAT_SHIFM</name>
<keyword id="KW-0964">Secreted</keyword>
<comment type="function">
    <text evidence="2">May contribute to pathogenesis, although some of its characteristics suggest it is a fossil gene.</text>
</comment>
<comment type="subcellular location">
    <subcellularLocation>
        <location evidence="2">Secreted</location>
    </subcellularLocation>
    <text evidence="2">Secreted via the type 3 secretion system (T3SS) (PubMed:35582904). Secretion depends on the N-terminus and is chaperone-independent (PubMed:35582904).</text>
</comment>
<comment type="induction">
    <text evidence="1 2">Member of the type 3 secretion system (T3SS) regulon (PubMed:30905752). Expressed at low levels and only when the T3SS is active, in a MxiE-dependent manner (PubMed:30905752, PubMed:35582904). Expression requires MxiE, IgpC and a MxiE box (PubMed:35582904).</text>
</comment>
<comment type="similarity">
    <text evidence="5">Belongs to the IcaT/YfdF family.</text>
</comment>
<accession>A0A4P7TKK3</accession>
<protein>
    <recommendedName>
        <fullName evidence="4">Invasion chromosome antigen T</fullName>
    </recommendedName>
</protein>
<sequence>MLPSISINNTSAAYPESINENNNDEINGLVQEFKNLFNGKEGISTCIKHLLELIKNAIRVNDDPYRSNINNPSVTYIDIGSNDTDHITIGIDNQEPIELPANYKDKELVRTIINDNIVEKTHDINNKEMIFSALKEIYDGDPGFIFDKISHKLRHTVTEFDESGKSEPTDLFTWYGKDKKGDSLAIVIKNKNGNDYLSLGYYDQDDYHIQRGIRINGDSLTQYCSENARSASAWFESSKAIMAESFATGSDHQVVNELNGERLREPNEVFKRLGRAIRYNFQVDDAKFRRDNVKEIISTLFANKVDVDHPENKYKDFKNLEDKVEKRLQNRQTKYQNEINQLSALGVNFDDI</sequence>
<reference key="1">
    <citation type="journal article" date="2012" name="J. Bacteriol.">
        <title>Genome sequence of Shigella flexneri serotype 5a strain M90T Sm.</title>
        <authorList>
            <person name="Onodera N.T."/>
            <person name="Ryu J."/>
            <person name="Durbic T."/>
            <person name="Nislow C."/>
            <person name="Archibald J.M."/>
            <person name="Rohde J.R."/>
        </authorList>
    </citation>
    <scope>NUCLEOTIDE SEQUENCE [LARGE SCALE GENOMIC DNA]</scope>
    <source>
        <strain>M90T / Serotype 5a</strain>
    </source>
</reference>
<reference key="2">
    <citation type="submission" date="2019-03" db="EMBL/GenBank/DDBJ databases">
        <title>Complete genome sequence and annotation of the laboratory reference strain Shigella flexneri 5a M90T and genome-wide transcription start site determination.</title>
        <authorList>
            <person name="Cervantes-Rivera R."/>
            <person name="Puhar A."/>
        </authorList>
    </citation>
    <scope>NUCLEOTIDE SEQUENCE [LARGE SCALE GENOMIC DNA]</scope>
    <source>
        <strain>M90T / Serotype 5a</strain>
    </source>
</reference>
<reference key="3">
    <citation type="journal article" date="2020" name="Methods">
        <title>RNA-Seq analysis of the T3SA regulon in Shigella flexneri reveals two new chromosomal genes upregulated in the on-state.</title>
        <authorList>
            <person name="Silue N."/>
            <person name="Marcantonio E."/>
            <person name="Campbell-Valois F.X."/>
        </authorList>
    </citation>
    <scope>INDUCTION</scope>
    <source>
        <strain>M90T / Serotype 5a</strain>
    </source>
</reference>
<reference key="4">
    <citation type="journal article" date="2022" name="MSphere">
        <title>icaR and icaT are ancient chromosome genes encoding substrates of the type III secretion apparatus in Shigella flexneri.</title>
        <authorList>
            <person name="Silue N."/>
            <person name="Campbell-Valois F.X."/>
        </authorList>
    </citation>
    <scope>FUNCTION</scope>
    <scope>SUBCELLULAR LOCATION</scope>
    <scope>INDUCTION</scope>
    <source>
        <strain>M90T / Serotype 5a</strain>
    </source>
</reference>
<evidence type="ECO:0000269" key="1">
    <source>
    </source>
</evidence>
<evidence type="ECO:0000269" key="2">
    <source>
    </source>
</evidence>
<evidence type="ECO:0000303" key="3">
    <source>
    </source>
</evidence>
<evidence type="ECO:0000303" key="4">
    <source>
    </source>
</evidence>
<evidence type="ECO:0000305" key="5"/>
<evidence type="ECO:0000312" key="6">
    <source>
        <dbReference type="EMBL" id="EID62780.1"/>
    </source>
</evidence>
<evidence type="ECO:0000312" key="7">
    <source>
        <dbReference type="EMBL" id="QCC30971.1"/>
    </source>
</evidence>
<dbReference type="EMBL" id="CM001474">
    <property type="protein sequence ID" value="EID62780.1"/>
    <property type="molecule type" value="Genomic_DNA"/>
</dbReference>
<dbReference type="EMBL" id="CP037923">
    <property type="protein sequence ID" value="QCC30971.1"/>
    <property type="molecule type" value="Genomic_DNA"/>
</dbReference>
<dbReference type="RefSeq" id="WP_000937781.1">
    <property type="nucleotide sequence ID" value="NZ_CM001474.1"/>
</dbReference>
<dbReference type="SMR" id="A0A4P7TKK3"/>
<dbReference type="Proteomes" id="UP000296678">
    <property type="component" value="Chromosome"/>
</dbReference>
<dbReference type="GO" id="GO:0005576">
    <property type="term" value="C:extracellular region"/>
    <property type="evidence" value="ECO:0007669"/>
    <property type="project" value="UniProtKB-SubCell"/>
</dbReference>
<feature type="chain" id="PRO_0000458651" description="Invasion chromosome antigen T">
    <location>
        <begin position="1"/>
        <end position="352"/>
    </location>
</feature>
<organism>
    <name type="scientific">Shigella flexneri serotype 5a (strain M90T)</name>
    <dbReference type="NCBI Taxonomy" id="1086030"/>
    <lineage>
        <taxon>Bacteria</taxon>
        <taxon>Pseudomonadati</taxon>
        <taxon>Pseudomonadota</taxon>
        <taxon>Gammaproteobacteria</taxon>
        <taxon>Enterobacterales</taxon>
        <taxon>Enterobacteriaceae</taxon>
        <taxon>Shigella</taxon>
    </lineage>
</organism>
<proteinExistence type="evidence at transcript level"/>